<evidence type="ECO:0000255" key="1">
    <source>
        <dbReference type="HAMAP-Rule" id="MF_01310"/>
    </source>
</evidence>
<evidence type="ECO:0000305" key="2"/>
<feature type="chain" id="PRO_0000123221" description="Small ribosomal subunit protein uS11">
    <location>
        <begin position="1"/>
        <end position="129"/>
    </location>
</feature>
<gene>
    <name evidence="1" type="primary">rpsK</name>
    <name type="ordered locus">SAR2310</name>
</gene>
<sequence length="129" mass="13882">MARKQVSRKRRVKKNIENGVAHIRSTFNNTIVTITDEFGNALSWSSAGALGFKGSKKSTPFAAQMASETASKSAMEHGLKTVEVTVKGPGPGRESAIRALQSAGLEVTAIRDVTPVPHNGCRPPKRRRV</sequence>
<proteinExistence type="inferred from homology"/>
<dbReference type="EMBL" id="BX571856">
    <property type="protein sequence ID" value="CAG41291.1"/>
    <property type="molecule type" value="Genomic_DNA"/>
</dbReference>
<dbReference type="RefSeq" id="WP_000101625.1">
    <property type="nucleotide sequence ID" value="NC_002952.2"/>
</dbReference>
<dbReference type="SMR" id="Q6GEK8"/>
<dbReference type="GeneID" id="98346537"/>
<dbReference type="KEGG" id="sar:SAR2310"/>
<dbReference type="HOGENOM" id="CLU_072439_5_0_9"/>
<dbReference type="Proteomes" id="UP000000596">
    <property type="component" value="Chromosome"/>
</dbReference>
<dbReference type="GO" id="GO:1990904">
    <property type="term" value="C:ribonucleoprotein complex"/>
    <property type="evidence" value="ECO:0007669"/>
    <property type="project" value="UniProtKB-KW"/>
</dbReference>
<dbReference type="GO" id="GO:0005840">
    <property type="term" value="C:ribosome"/>
    <property type="evidence" value="ECO:0007669"/>
    <property type="project" value="UniProtKB-KW"/>
</dbReference>
<dbReference type="GO" id="GO:0019843">
    <property type="term" value="F:rRNA binding"/>
    <property type="evidence" value="ECO:0007669"/>
    <property type="project" value="UniProtKB-UniRule"/>
</dbReference>
<dbReference type="GO" id="GO:0003735">
    <property type="term" value="F:structural constituent of ribosome"/>
    <property type="evidence" value="ECO:0007669"/>
    <property type="project" value="InterPro"/>
</dbReference>
<dbReference type="GO" id="GO:0006412">
    <property type="term" value="P:translation"/>
    <property type="evidence" value="ECO:0007669"/>
    <property type="project" value="UniProtKB-UniRule"/>
</dbReference>
<dbReference type="FunFam" id="3.30.420.80:FF:000001">
    <property type="entry name" value="30S ribosomal protein S11"/>
    <property type="match status" value="1"/>
</dbReference>
<dbReference type="Gene3D" id="3.30.420.80">
    <property type="entry name" value="Ribosomal protein S11"/>
    <property type="match status" value="1"/>
</dbReference>
<dbReference type="HAMAP" id="MF_01310">
    <property type="entry name" value="Ribosomal_uS11"/>
    <property type="match status" value="1"/>
</dbReference>
<dbReference type="InterPro" id="IPR001971">
    <property type="entry name" value="Ribosomal_uS11"/>
</dbReference>
<dbReference type="InterPro" id="IPR019981">
    <property type="entry name" value="Ribosomal_uS11_bac-type"/>
</dbReference>
<dbReference type="InterPro" id="IPR018102">
    <property type="entry name" value="Ribosomal_uS11_CS"/>
</dbReference>
<dbReference type="InterPro" id="IPR036967">
    <property type="entry name" value="Ribosomal_uS11_sf"/>
</dbReference>
<dbReference type="NCBIfam" id="NF003698">
    <property type="entry name" value="PRK05309.1"/>
    <property type="match status" value="1"/>
</dbReference>
<dbReference type="NCBIfam" id="TIGR03632">
    <property type="entry name" value="uS11_bact"/>
    <property type="match status" value="1"/>
</dbReference>
<dbReference type="PANTHER" id="PTHR11759">
    <property type="entry name" value="40S RIBOSOMAL PROTEIN S14/30S RIBOSOMAL PROTEIN S11"/>
    <property type="match status" value="1"/>
</dbReference>
<dbReference type="Pfam" id="PF00411">
    <property type="entry name" value="Ribosomal_S11"/>
    <property type="match status" value="1"/>
</dbReference>
<dbReference type="PIRSF" id="PIRSF002131">
    <property type="entry name" value="Ribosomal_S11"/>
    <property type="match status" value="1"/>
</dbReference>
<dbReference type="SUPFAM" id="SSF53137">
    <property type="entry name" value="Translational machinery components"/>
    <property type="match status" value="1"/>
</dbReference>
<dbReference type="PROSITE" id="PS00054">
    <property type="entry name" value="RIBOSOMAL_S11"/>
    <property type="match status" value="1"/>
</dbReference>
<reference key="1">
    <citation type="journal article" date="2004" name="Proc. Natl. Acad. Sci. U.S.A.">
        <title>Complete genomes of two clinical Staphylococcus aureus strains: evidence for the rapid evolution of virulence and drug resistance.</title>
        <authorList>
            <person name="Holden M.T.G."/>
            <person name="Feil E.J."/>
            <person name="Lindsay J.A."/>
            <person name="Peacock S.J."/>
            <person name="Day N.P.J."/>
            <person name="Enright M.C."/>
            <person name="Foster T.J."/>
            <person name="Moore C.E."/>
            <person name="Hurst L."/>
            <person name="Atkin R."/>
            <person name="Barron A."/>
            <person name="Bason N."/>
            <person name="Bentley S.D."/>
            <person name="Chillingworth C."/>
            <person name="Chillingworth T."/>
            <person name="Churcher C."/>
            <person name="Clark L."/>
            <person name="Corton C."/>
            <person name="Cronin A."/>
            <person name="Doggett J."/>
            <person name="Dowd L."/>
            <person name="Feltwell T."/>
            <person name="Hance Z."/>
            <person name="Harris B."/>
            <person name="Hauser H."/>
            <person name="Holroyd S."/>
            <person name="Jagels K."/>
            <person name="James K.D."/>
            <person name="Lennard N."/>
            <person name="Line A."/>
            <person name="Mayes R."/>
            <person name="Moule S."/>
            <person name="Mungall K."/>
            <person name="Ormond D."/>
            <person name="Quail M.A."/>
            <person name="Rabbinowitsch E."/>
            <person name="Rutherford K.M."/>
            <person name="Sanders M."/>
            <person name="Sharp S."/>
            <person name="Simmonds M."/>
            <person name="Stevens K."/>
            <person name="Whitehead S."/>
            <person name="Barrell B.G."/>
            <person name="Spratt B.G."/>
            <person name="Parkhill J."/>
        </authorList>
    </citation>
    <scope>NUCLEOTIDE SEQUENCE [LARGE SCALE GENOMIC DNA]</scope>
    <source>
        <strain>MRSA252</strain>
    </source>
</reference>
<keyword id="KW-0687">Ribonucleoprotein</keyword>
<keyword id="KW-0689">Ribosomal protein</keyword>
<keyword id="KW-0694">RNA-binding</keyword>
<keyword id="KW-0699">rRNA-binding</keyword>
<name>RS11_STAAR</name>
<protein>
    <recommendedName>
        <fullName evidence="1">Small ribosomal subunit protein uS11</fullName>
    </recommendedName>
    <alternativeName>
        <fullName evidence="2">30S ribosomal protein S11</fullName>
    </alternativeName>
</protein>
<comment type="function">
    <text evidence="1">Located on the platform of the 30S subunit, it bridges several disparate RNA helices of the 16S rRNA. Forms part of the Shine-Dalgarno cleft in the 70S ribosome.</text>
</comment>
<comment type="subunit">
    <text evidence="1">Part of the 30S ribosomal subunit. Interacts with proteins S7 and S18. Binds to IF-3.</text>
</comment>
<comment type="similarity">
    <text evidence="1">Belongs to the universal ribosomal protein uS11 family.</text>
</comment>
<organism>
    <name type="scientific">Staphylococcus aureus (strain MRSA252)</name>
    <dbReference type="NCBI Taxonomy" id="282458"/>
    <lineage>
        <taxon>Bacteria</taxon>
        <taxon>Bacillati</taxon>
        <taxon>Bacillota</taxon>
        <taxon>Bacilli</taxon>
        <taxon>Bacillales</taxon>
        <taxon>Staphylococcaceae</taxon>
        <taxon>Staphylococcus</taxon>
    </lineage>
</organism>
<accession>Q6GEK8</accession>